<feature type="chain" id="PRO_0000075559" description="2-C-methyl-D-erythritol 4-phosphate cytidylyltransferase">
    <location>
        <begin position="1"/>
        <end position="212"/>
    </location>
</feature>
<feature type="site" description="Transition state stabilizer" evidence="1">
    <location>
        <position position="17"/>
    </location>
</feature>
<feature type="site" description="Transition state stabilizer" evidence="1">
    <location>
        <position position="24"/>
    </location>
</feature>
<feature type="site" description="Positions MEP for the nucleophilic attack" evidence="1">
    <location>
        <position position="142"/>
    </location>
</feature>
<feature type="site" description="Positions MEP for the nucleophilic attack" evidence="1">
    <location>
        <position position="198"/>
    </location>
</feature>
<gene>
    <name evidence="1" type="primary">ispD</name>
    <name type="ordered locus">CCA_00162</name>
</gene>
<reference key="1">
    <citation type="journal article" date="2003" name="Nucleic Acids Res.">
        <title>Genome sequence of Chlamydophila caviae (Chlamydia psittaci GPIC): examining the role of niche-specific genes in the evolution of the Chlamydiaceae.</title>
        <authorList>
            <person name="Read T.D."/>
            <person name="Myers G.S.A."/>
            <person name="Brunham R.C."/>
            <person name="Nelson W.C."/>
            <person name="Paulsen I.T."/>
            <person name="Heidelberg J.F."/>
            <person name="Holtzapple E.K."/>
            <person name="Khouri H.M."/>
            <person name="Federova N.B."/>
            <person name="Carty H.A."/>
            <person name="Umayam L.A."/>
            <person name="Haft D.H."/>
            <person name="Peterson J.D."/>
            <person name="Beanan M.J."/>
            <person name="White O."/>
            <person name="Salzberg S.L."/>
            <person name="Hsia R.-C."/>
            <person name="McClarty G."/>
            <person name="Rank R.G."/>
            <person name="Bavoil P.M."/>
            <person name="Fraser C.M."/>
        </authorList>
    </citation>
    <scope>NUCLEOTIDE SEQUENCE [LARGE SCALE GENOMIC DNA]</scope>
    <source>
        <strain>ATCC VR-813 / DSM 19441 / 03DC25 / GPIC</strain>
    </source>
</reference>
<organism>
    <name type="scientific">Chlamydia caviae (strain ATCC VR-813 / DSM 19441 / 03DC25 / GPIC)</name>
    <name type="common">Chlamydophila caviae</name>
    <dbReference type="NCBI Taxonomy" id="227941"/>
    <lineage>
        <taxon>Bacteria</taxon>
        <taxon>Pseudomonadati</taxon>
        <taxon>Chlamydiota</taxon>
        <taxon>Chlamydiia</taxon>
        <taxon>Chlamydiales</taxon>
        <taxon>Chlamydiaceae</taxon>
        <taxon>Chlamydia/Chlamydophila group</taxon>
        <taxon>Chlamydia</taxon>
    </lineage>
</organism>
<accession>Q824I4</accession>
<dbReference type="EC" id="2.7.7.60" evidence="1"/>
<dbReference type="EMBL" id="AE015925">
    <property type="protein sequence ID" value="AAP04913.1"/>
    <property type="status" value="ALT_INIT"/>
    <property type="molecule type" value="Genomic_DNA"/>
</dbReference>
<dbReference type="RefSeq" id="WP_041462197.1">
    <property type="nucleotide sequence ID" value="NC_003361.3"/>
</dbReference>
<dbReference type="SMR" id="Q824I4"/>
<dbReference type="STRING" id="227941.CCA_00162"/>
<dbReference type="KEGG" id="cca:CCA_00162"/>
<dbReference type="eggNOG" id="COG1211">
    <property type="taxonomic scope" value="Bacteria"/>
</dbReference>
<dbReference type="HOGENOM" id="CLU_061281_2_2_0"/>
<dbReference type="OrthoDB" id="9806837at2"/>
<dbReference type="UniPathway" id="UPA00056">
    <property type="reaction ID" value="UER00093"/>
</dbReference>
<dbReference type="Proteomes" id="UP000002193">
    <property type="component" value="Chromosome"/>
</dbReference>
<dbReference type="GO" id="GO:0050518">
    <property type="term" value="F:2-C-methyl-D-erythritol 4-phosphate cytidylyltransferase activity"/>
    <property type="evidence" value="ECO:0007669"/>
    <property type="project" value="UniProtKB-UniRule"/>
</dbReference>
<dbReference type="GO" id="GO:0019288">
    <property type="term" value="P:isopentenyl diphosphate biosynthetic process, methylerythritol 4-phosphate pathway"/>
    <property type="evidence" value="ECO:0007669"/>
    <property type="project" value="UniProtKB-UniRule"/>
</dbReference>
<dbReference type="CDD" id="cd02516">
    <property type="entry name" value="CDP-ME_synthetase"/>
    <property type="match status" value="1"/>
</dbReference>
<dbReference type="Gene3D" id="3.90.550.10">
    <property type="entry name" value="Spore Coat Polysaccharide Biosynthesis Protein SpsA, Chain A"/>
    <property type="match status" value="1"/>
</dbReference>
<dbReference type="HAMAP" id="MF_00108">
    <property type="entry name" value="IspD"/>
    <property type="match status" value="1"/>
</dbReference>
<dbReference type="InterPro" id="IPR001228">
    <property type="entry name" value="IspD"/>
</dbReference>
<dbReference type="InterPro" id="IPR034683">
    <property type="entry name" value="IspD/TarI"/>
</dbReference>
<dbReference type="InterPro" id="IPR050088">
    <property type="entry name" value="IspD/TarI_cytidylyltransf_bact"/>
</dbReference>
<dbReference type="InterPro" id="IPR018294">
    <property type="entry name" value="ISPD_synthase_CS"/>
</dbReference>
<dbReference type="InterPro" id="IPR029044">
    <property type="entry name" value="Nucleotide-diphossugar_trans"/>
</dbReference>
<dbReference type="NCBIfam" id="TIGR00453">
    <property type="entry name" value="ispD"/>
    <property type="match status" value="1"/>
</dbReference>
<dbReference type="PANTHER" id="PTHR32125">
    <property type="entry name" value="2-C-METHYL-D-ERYTHRITOL 4-PHOSPHATE CYTIDYLYLTRANSFERASE, CHLOROPLASTIC"/>
    <property type="match status" value="1"/>
</dbReference>
<dbReference type="PANTHER" id="PTHR32125:SF4">
    <property type="entry name" value="2-C-METHYL-D-ERYTHRITOL 4-PHOSPHATE CYTIDYLYLTRANSFERASE, CHLOROPLASTIC"/>
    <property type="match status" value="1"/>
</dbReference>
<dbReference type="Pfam" id="PF01128">
    <property type="entry name" value="IspD"/>
    <property type="match status" value="1"/>
</dbReference>
<dbReference type="SUPFAM" id="SSF53448">
    <property type="entry name" value="Nucleotide-diphospho-sugar transferases"/>
    <property type="match status" value="1"/>
</dbReference>
<dbReference type="PROSITE" id="PS01295">
    <property type="entry name" value="ISPD"/>
    <property type="match status" value="1"/>
</dbReference>
<name>ISPD_CHLCV</name>
<evidence type="ECO:0000255" key="1">
    <source>
        <dbReference type="HAMAP-Rule" id="MF_00108"/>
    </source>
</evidence>
<evidence type="ECO:0000305" key="2"/>
<keyword id="KW-0414">Isoprene biosynthesis</keyword>
<keyword id="KW-0548">Nucleotidyltransferase</keyword>
<keyword id="KW-0808">Transferase</keyword>
<proteinExistence type="inferred from homology"/>
<sequence>MDPKCSLILLSGGKGERFGANQPKQYLPFQGEPLILHALKTALHIPEITEVIVVCDVSYRHIFEGFPVKFAESGKRRQDSVFSGLQHVSNPWVLIHDGVRPFIYPDEVTELIAVAQQTGAATLVSNVPYTIKQRHPVKTLDRDALSIVHTPQCVKTEILSAGLEFASREGITLVDDTQAAELLDIPVSLVSSKHPQIKITYPEDLTIAHALL</sequence>
<protein>
    <recommendedName>
        <fullName evidence="1">2-C-methyl-D-erythritol 4-phosphate cytidylyltransferase</fullName>
        <ecNumber evidence="1">2.7.7.60</ecNumber>
    </recommendedName>
    <alternativeName>
        <fullName evidence="1">4-diphosphocytidyl-2C-methyl-D-erythritol synthase</fullName>
    </alternativeName>
    <alternativeName>
        <fullName evidence="1">MEP cytidylyltransferase</fullName>
        <shortName evidence="1">MCT</shortName>
    </alternativeName>
</protein>
<comment type="function">
    <text evidence="1">Catalyzes the formation of 4-diphosphocytidyl-2-C-methyl-D-erythritol from CTP and 2-C-methyl-D-erythritol 4-phosphate (MEP).</text>
</comment>
<comment type="catalytic activity">
    <reaction evidence="1">
        <text>2-C-methyl-D-erythritol 4-phosphate + CTP + H(+) = 4-CDP-2-C-methyl-D-erythritol + diphosphate</text>
        <dbReference type="Rhea" id="RHEA:13429"/>
        <dbReference type="ChEBI" id="CHEBI:15378"/>
        <dbReference type="ChEBI" id="CHEBI:33019"/>
        <dbReference type="ChEBI" id="CHEBI:37563"/>
        <dbReference type="ChEBI" id="CHEBI:57823"/>
        <dbReference type="ChEBI" id="CHEBI:58262"/>
        <dbReference type="EC" id="2.7.7.60"/>
    </reaction>
</comment>
<comment type="pathway">
    <text evidence="1">Isoprenoid biosynthesis; isopentenyl diphosphate biosynthesis via DXP pathway; isopentenyl diphosphate from 1-deoxy-D-xylulose 5-phosphate: step 2/6.</text>
</comment>
<comment type="similarity">
    <text evidence="1">Belongs to the IspD/TarI cytidylyltransferase family. IspD subfamily.</text>
</comment>
<comment type="sequence caution" evidence="2">
    <conflict type="erroneous initiation">
        <sequence resource="EMBL-CDS" id="AAP04913"/>
    </conflict>
</comment>